<feature type="chain" id="PRO_1000086293" description="Large ribosomal subunit protein uL1">
    <location>
        <begin position="1"/>
        <end position="239"/>
    </location>
</feature>
<accession>A4T1M1</accession>
<keyword id="KW-0678">Repressor</keyword>
<keyword id="KW-0687">Ribonucleoprotein</keyword>
<keyword id="KW-0689">Ribosomal protein</keyword>
<keyword id="KW-0694">RNA-binding</keyword>
<keyword id="KW-0699">rRNA-binding</keyword>
<keyword id="KW-0810">Translation regulation</keyword>
<keyword id="KW-0820">tRNA-binding</keyword>
<protein>
    <recommendedName>
        <fullName evidence="1">Large ribosomal subunit protein uL1</fullName>
    </recommendedName>
    <alternativeName>
        <fullName evidence="2">50S ribosomal protein L1</fullName>
    </alternativeName>
</protein>
<proteinExistence type="inferred from homology"/>
<organism>
    <name type="scientific">Mycolicibacterium gilvum (strain PYR-GCK)</name>
    <name type="common">Mycobacterium gilvum (strain PYR-GCK)</name>
    <dbReference type="NCBI Taxonomy" id="350054"/>
    <lineage>
        <taxon>Bacteria</taxon>
        <taxon>Bacillati</taxon>
        <taxon>Actinomycetota</taxon>
        <taxon>Actinomycetes</taxon>
        <taxon>Mycobacteriales</taxon>
        <taxon>Mycobacteriaceae</taxon>
        <taxon>Mycolicibacterium</taxon>
    </lineage>
</organism>
<gene>
    <name evidence="1" type="primary">rplA</name>
    <name type="ordered locus">Mflv_5115</name>
</gene>
<sequence>MSKNSKAYKEAAEKIDRDRVYSPLEAAKLAKETSSKKQDATVEVAIRLGVDPRKADQMVRGTVNLPHGTGKTARVAVFAVGEKAEAAVAAGADVVGSDDLIEKIQGGFLDFDAAIATPDQMAKVGRIARILGPRGLMPNPKTGTVTPDVTKAVNDIKGGKINFRVDKQANLHFVIGKASFDEKALAENYGAALDEILRAKPSSSKGRYLKKVVVSTTTGPGIPVDPTVTRNFTEEPAQS</sequence>
<dbReference type="EMBL" id="CP000656">
    <property type="protein sequence ID" value="ABP47581.1"/>
    <property type="molecule type" value="Genomic_DNA"/>
</dbReference>
<dbReference type="SMR" id="A4T1M1"/>
<dbReference type="STRING" id="350054.Mflv_5115"/>
<dbReference type="KEGG" id="mgi:Mflv_5115"/>
<dbReference type="eggNOG" id="COG0081">
    <property type="taxonomic scope" value="Bacteria"/>
</dbReference>
<dbReference type="HOGENOM" id="CLU_062853_0_0_11"/>
<dbReference type="OrthoDB" id="9803740at2"/>
<dbReference type="GO" id="GO:0015934">
    <property type="term" value="C:large ribosomal subunit"/>
    <property type="evidence" value="ECO:0007669"/>
    <property type="project" value="InterPro"/>
</dbReference>
<dbReference type="GO" id="GO:0019843">
    <property type="term" value="F:rRNA binding"/>
    <property type="evidence" value="ECO:0007669"/>
    <property type="project" value="UniProtKB-UniRule"/>
</dbReference>
<dbReference type="GO" id="GO:0003735">
    <property type="term" value="F:structural constituent of ribosome"/>
    <property type="evidence" value="ECO:0007669"/>
    <property type="project" value="InterPro"/>
</dbReference>
<dbReference type="GO" id="GO:0000049">
    <property type="term" value="F:tRNA binding"/>
    <property type="evidence" value="ECO:0007669"/>
    <property type="project" value="UniProtKB-KW"/>
</dbReference>
<dbReference type="GO" id="GO:0006417">
    <property type="term" value="P:regulation of translation"/>
    <property type="evidence" value="ECO:0007669"/>
    <property type="project" value="UniProtKB-KW"/>
</dbReference>
<dbReference type="GO" id="GO:0006412">
    <property type="term" value="P:translation"/>
    <property type="evidence" value="ECO:0007669"/>
    <property type="project" value="UniProtKB-UniRule"/>
</dbReference>
<dbReference type="CDD" id="cd00403">
    <property type="entry name" value="Ribosomal_L1"/>
    <property type="match status" value="1"/>
</dbReference>
<dbReference type="FunFam" id="3.40.50.790:FF:000001">
    <property type="entry name" value="50S ribosomal protein L1"/>
    <property type="match status" value="1"/>
</dbReference>
<dbReference type="Gene3D" id="3.30.190.20">
    <property type="match status" value="1"/>
</dbReference>
<dbReference type="Gene3D" id="3.40.50.790">
    <property type="match status" value="1"/>
</dbReference>
<dbReference type="HAMAP" id="MF_01318_B">
    <property type="entry name" value="Ribosomal_uL1_B"/>
    <property type="match status" value="1"/>
</dbReference>
<dbReference type="InterPro" id="IPR005878">
    <property type="entry name" value="Ribosom_uL1_bac-type"/>
</dbReference>
<dbReference type="InterPro" id="IPR002143">
    <property type="entry name" value="Ribosomal_uL1"/>
</dbReference>
<dbReference type="InterPro" id="IPR023674">
    <property type="entry name" value="Ribosomal_uL1-like"/>
</dbReference>
<dbReference type="InterPro" id="IPR028364">
    <property type="entry name" value="Ribosomal_uL1/biogenesis"/>
</dbReference>
<dbReference type="InterPro" id="IPR016095">
    <property type="entry name" value="Ribosomal_uL1_3-a/b-sand"/>
</dbReference>
<dbReference type="InterPro" id="IPR023673">
    <property type="entry name" value="Ribosomal_uL1_CS"/>
</dbReference>
<dbReference type="NCBIfam" id="TIGR01169">
    <property type="entry name" value="rplA_bact"/>
    <property type="match status" value="1"/>
</dbReference>
<dbReference type="PANTHER" id="PTHR36427">
    <property type="entry name" value="54S RIBOSOMAL PROTEIN L1, MITOCHONDRIAL"/>
    <property type="match status" value="1"/>
</dbReference>
<dbReference type="PANTHER" id="PTHR36427:SF3">
    <property type="entry name" value="LARGE RIBOSOMAL SUBUNIT PROTEIN UL1M"/>
    <property type="match status" value="1"/>
</dbReference>
<dbReference type="Pfam" id="PF00687">
    <property type="entry name" value="Ribosomal_L1"/>
    <property type="match status" value="1"/>
</dbReference>
<dbReference type="PIRSF" id="PIRSF002155">
    <property type="entry name" value="Ribosomal_L1"/>
    <property type="match status" value="1"/>
</dbReference>
<dbReference type="SUPFAM" id="SSF56808">
    <property type="entry name" value="Ribosomal protein L1"/>
    <property type="match status" value="1"/>
</dbReference>
<dbReference type="PROSITE" id="PS01199">
    <property type="entry name" value="RIBOSOMAL_L1"/>
    <property type="match status" value="1"/>
</dbReference>
<name>RL1_MYCGI</name>
<comment type="function">
    <text evidence="1">Binds directly to 23S rRNA. The L1 stalk is quite mobile in the ribosome, and is involved in E site tRNA release.</text>
</comment>
<comment type="function">
    <text evidence="1">Protein L1 is also a translational repressor protein, it controls the translation of the L11 operon by binding to its mRNA.</text>
</comment>
<comment type="subunit">
    <text evidence="1">Part of the 50S ribosomal subunit.</text>
</comment>
<comment type="similarity">
    <text evidence="1">Belongs to the universal ribosomal protein uL1 family.</text>
</comment>
<reference key="1">
    <citation type="submission" date="2007-04" db="EMBL/GenBank/DDBJ databases">
        <title>Complete sequence of chromosome of Mycobacterium gilvum PYR-GCK.</title>
        <authorList>
            <consortium name="US DOE Joint Genome Institute"/>
            <person name="Copeland A."/>
            <person name="Lucas S."/>
            <person name="Lapidus A."/>
            <person name="Barry K."/>
            <person name="Detter J.C."/>
            <person name="Glavina del Rio T."/>
            <person name="Hammon N."/>
            <person name="Israni S."/>
            <person name="Dalin E."/>
            <person name="Tice H."/>
            <person name="Pitluck S."/>
            <person name="Chain P."/>
            <person name="Malfatti S."/>
            <person name="Shin M."/>
            <person name="Vergez L."/>
            <person name="Schmutz J."/>
            <person name="Larimer F."/>
            <person name="Land M."/>
            <person name="Hauser L."/>
            <person name="Kyrpides N."/>
            <person name="Mikhailova N."/>
            <person name="Miller C."/>
            <person name="Richardson P."/>
        </authorList>
    </citation>
    <scope>NUCLEOTIDE SEQUENCE [LARGE SCALE GENOMIC DNA]</scope>
    <source>
        <strain>PYR-GCK</strain>
    </source>
</reference>
<evidence type="ECO:0000255" key="1">
    <source>
        <dbReference type="HAMAP-Rule" id="MF_01318"/>
    </source>
</evidence>
<evidence type="ECO:0000305" key="2"/>